<accession>P55966</accession>
<sequence length="38" mass="4174">RCSPCFTTDQQMTKKCYDCCGGKGKGKCYGPQCICAPY</sequence>
<dbReference type="SMR" id="P55966"/>
<dbReference type="GO" id="GO:0005576">
    <property type="term" value="C:extracellular region"/>
    <property type="evidence" value="ECO:0007669"/>
    <property type="project" value="UniProtKB-SubCell"/>
</dbReference>
<dbReference type="GO" id="GO:0017081">
    <property type="term" value="F:chloride channel regulator activity"/>
    <property type="evidence" value="ECO:0007669"/>
    <property type="project" value="UniProtKB-KW"/>
</dbReference>
<dbReference type="GO" id="GO:0090729">
    <property type="term" value="F:toxin activity"/>
    <property type="evidence" value="ECO:0007669"/>
    <property type="project" value="UniProtKB-KW"/>
</dbReference>
<dbReference type="InterPro" id="IPR036574">
    <property type="entry name" value="Scorpion_toxin-like_sf"/>
</dbReference>
<dbReference type="InterPro" id="IPR007958">
    <property type="entry name" value="Scorpion_toxinS_Cl_inh"/>
</dbReference>
<dbReference type="Pfam" id="PF05294">
    <property type="entry name" value="Toxin_5"/>
    <property type="match status" value="1"/>
</dbReference>
<dbReference type="SUPFAM" id="SSF57095">
    <property type="entry name" value="Scorpion toxin-like"/>
    <property type="match status" value="1"/>
</dbReference>
<dbReference type="PROSITE" id="PS51200">
    <property type="entry name" value="SHORT_SCORPION_CHLORIDE"/>
    <property type="match status" value="1"/>
</dbReference>
<keyword id="KW-1265">Chloride channel impairing toxin</keyword>
<keyword id="KW-0903">Direct protein sequencing</keyword>
<keyword id="KW-1015">Disulfide bond</keyword>
<keyword id="KW-0872">Ion channel impairing toxin</keyword>
<keyword id="KW-0960">Knottin</keyword>
<keyword id="KW-0964">Secreted</keyword>
<keyword id="KW-0800">Toxin</keyword>
<keyword id="KW-0870">Voltage-gated chloride channel impairing toxin</keyword>
<protein>
    <recommendedName>
        <fullName>Toxin Lqh 8/6</fullName>
    </recommendedName>
</protein>
<evidence type="ECO:0000250" key="1">
    <source>
        <dbReference type="UniProtKB" id="Q9UAD0"/>
    </source>
</evidence>
<evidence type="ECO:0000255" key="2">
    <source>
        <dbReference type="PROSITE-ProRule" id="PRU00545"/>
    </source>
</evidence>
<evidence type="ECO:0000269" key="3">
    <source>
    </source>
</evidence>
<evidence type="ECO:0000305" key="4">
    <source>
    </source>
</evidence>
<reference key="1">
    <citation type="journal article" date="1997" name="Eur. J. Biochem.">
        <title>Solution structure of Lqh-8/6, a toxin-like peptide from a scorpion venom -- structural heterogeneity induced by proline cis/trans isomerization.</title>
        <authorList>
            <person name="Adjadj E."/>
            <person name="Naudat V."/>
            <person name="Quiniou E."/>
            <person name="Wouters D."/>
            <person name="Sautiere P."/>
            <person name="Craescu C.T."/>
        </authorList>
    </citation>
    <scope>PROTEIN SEQUENCE</scope>
    <scope>STRUCTURE BY NMR</scope>
    <scope>DISULFIDE BONDS</scope>
    <scope>MASS SPECTROMETRY</scope>
    <scope>SUBCELLULAR LOCATION</scope>
    <source>
        <tissue>Venom</tissue>
    </source>
</reference>
<reference key="2">
    <citation type="journal article" date="2006" name="Toxicon">
        <title>Moving pieces in a taxonomic puzzle: venom 2D-LC/MS and data clustering analyses to infer phylogenetic relationships in some scorpions from the Buthidae family (Scorpiones).</title>
        <authorList>
            <person name="Nascimento D.G."/>
            <person name="Rates B."/>
            <person name="Santos D.M."/>
            <person name="Verano-Braga T."/>
            <person name="Barbosa-Silva A."/>
            <person name="Dutra A.A.A."/>
            <person name="Biondi I."/>
            <person name="Martin-Eauclaire M.-F."/>
            <person name="De Lima M.E."/>
            <person name="Pimenta A.M.C."/>
        </authorList>
    </citation>
    <scope>IDENTIFICATION BY MASS SPECTROMETRY</scope>
</reference>
<proteinExistence type="evidence at protein level"/>
<feature type="peptide" id="PRO_0000044942" description="Toxin Lqh 8/6" evidence="3">
    <location>
        <begin position="1"/>
        <end position="38"/>
    </location>
</feature>
<feature type="disulfide bond" evidence="3">
    <location>
        <begin position="2"/>
        <end position="19"/>
    </location>
</feature>
<feature type="disulfide bond" evidence="3">
    <location>
        <begin position="5"/>
        <end position="28"/>
    </location>
</feature>
<feature type="disulfide bond" evidence="3">
    <location>
        <begin position="16"/>
        <end position="33"/>
    </location>
</feature>
<feature type="disulfide bond" evidence="3">
    <location>
        <begin position="20"/>
        <end position="35"/>
    </location>
</feature>
<comment type="function">
    <text evidence="1">Toxin with unknown function in healthy organisms. On glioma cells, interacts with chloride channels (probably ClC-3/CLCN3) and MMP2 at the surface of glioma cells. This complex is then internalized via caveolae, thus inhibiting the chloride channels necessary for cell shrinkage and tumor propagation.</text>
</comment>
<comment type="subcellular location">
    <subcellularLocation>
        <location evidence="3">Secreted</location>
    </subcellularLocation>
</comment>
<comment type="tissue specificity">
    <text evidence="4">Expressed by the venom gland.</text>
</comment>
<comment type="domain">
    <text evidence="3">The presence of a 'disulfide through disulfide knot' structurally defines this protein as a knottin.</text>
</comment>
<comment type="mass spectrometry" mass="4165.0" error="0.4" method="Unknown" evidence="3"/>
<comment type="similarity">
    <text evidence="2">Belongs to the short scorpion toxin superfamily. Chloride channel inhibitor family.</text>
</comment>
<organism>
    <name type="scientific">Leiurus hebraeus</name>
    <name type="common">Hebrew deathstalker scorpion</name>
    <name type="synonym">Leiurus quinquestriatus hebraeus</name>
    <dbReference type="NCBI Taxonomy" id="2899558"/>
    <lineage>
        <taxon>Eukaryota</taxon>
        <taxon>Metazoa</taxon>
        <taxon>Ecdysozoa</taxon>
        <taxon>Arthropoda</taxon>
        <taxon>Chelicerata</taxon>
        <taxon>Arachnida</taxon>
        <taxon>Scorpiones</taxon>
        <taxon>Buthida</taxon>
        <taxon>Buthoidea</taxon>
        <taxon>Buthidae</taxon>
        <taxon>Leiurus</taxon>
    </lineage>
</organism>
<name>CTXL8_LEIHE</name>